<evidence type="ECO:0000255" key="1">
    <source>
        <dbReference type="HAMAP-Rule" id="MF_04093"/>
    </source>
</evidence>
<keyword id="KW-1035">Host cytoplasm</keyword>
<keyword id="KW-1045">Host mitochondrion</keyword>
<organismHost>
    <name type="scientific">Macaca mulatta</name>
    <name type="common">Rhesus macaque</name>
    <dbReference type="NCBI Taxonomy" id="9544"/>
</organismHost>
<protein>
    <recommendedName>
        <fullName evidence="1">Non-structural protein 6</fullName>
        <shortName evidence="1">NSP6</shortName>
    </recommendedName>
</protein>
<sequence length="92" mass="11005">MNHLQRRQLFLENLLVGVNSTFHQMQKHSISTCCRSLQRILDHLILLQTTHSPVFRLDRMQLRQMQTLACLWIHRHNHDLQVTLDAIKWISP</sequence>
<comment type="subunit">
    <text evidence="1">Interacts with NSP2 and NSP5.</text>
</comment>
<comment type="subcellular location">
    <subcellularLocation>
        <location evidence="1">Host cytoplasm</location>
    </subcellularLocation>
    <subcellularLocation>
        <location evidence="1">Host mitochondrion</location>
    </subcellularLocation>
    <text evidence="1">Found in spherical cytoplasmic structures, called viral factories, that appear early after infection and are the site of viral replication and packaging.</text>
</comment>
<comment type="similarity">
    <text evidence="1">Belongs to the rotavirus A NSP6 family.</text>
</comment>
<organism>
    <name type="scientific">Rotavirus A (strain RVA/Monkey/United States/RRV/1975/G3P5B[3])</name>
    <name type="common">RV-A</name>
    <dbReference type="NCBI Taxonomy" id="444185"/>
    <lineage>
        <taxon>Viruses</taxon>
        <taxon>Riboviria</taxon>
        <taxon>Orthornavirae</taxon>
        <taxon>Duplornaviricota</taxon>
        <taxon>Resentoviricetes</taxon>
        <taxon>Reovirales</taxon>
        <taxon>Sedoreoviridae</taxon>
        <taxon>Rotavirus</taxon>
        <taxon>Rotavirus A</taxon>
    </lineage>
</organism>
<dbReference type="EMBL" id="AF306492">
    <property type="protein sequence ID" value="AAK15266.1"/>
    <property type="molecule type" value="Genomic_RNA"/>
</dbReference>
<dbReference type="GO" id="GO:0033650">
    <property type="term" value="C:host cell mitochondrion"/>
    <property type="evidence" value="ECO:0007669"/>
    <property type="project" value="UniProtKB-SubCell"/>
</dbReference>
<dbReference type="HAMAP" id="MF_04093">
    <property type="entry name" value="ROTA_NSP6"/>
    <property type="match status" value="1"/>
</dbReference>
<dbReference type="InterPro" id="IPR006950">
    <property type="entry name" value="Rotavirus_NSP6"/>
</dbReference>
<dbReference type="Pfam" id="PF04866">
    <property type="entry name" value="Rota_NS6"/>
    <property type="match status" value="1"/>
</dbReference>
<feature type="chain" id="PRO_0000369526" description="Non-structural protein 6">
    <location>
        <begin position="1"/>
        <end position="92"/>
    </location>
</feature>
<proteinExistence type="inferred from homology"/>
<accession>Q993T3</accession>
<reference key="1">
    <citation type="journal article" date="2001" name="Virus Genes">
        <title>Nucleotide sequence analysis of rotavirus gene 11 from two tissue culture-adapted ATCC strains, RRV and Wa.</title>
        <authorList>
            <person name="Mohan K.V.K."/>
            <person name="Atreya C.D."/>
        </authorList>
    </citation>
    <scope>NUCLEOTIDE SEQUENCE [GENOMIC RNA]</scope>
</reference>
<name>NSP6_ROTRH</name>